<protein>
    <recommendedName>
        <fullName evidence="1">Single-stranded DNA-binding protein</fullName>
        <shortName evidence="1">SSB</shortName>
    </recommendedName>
</protein>
<feature type="chain" id="PRO_0000096082" description="Single-stranded DNA-binding protein">
    <location>
        <begin position="1"/>
        <end position="189"/>
    </location>
</feature>
<feature type="domain" description="SSB" evidence="1">
    <location>
        <begin position="5"/>
        <end position="109"/>
    </location>
</feature>
<feature type="region of interest" description="Disordered" evidence="2">
    <location>
        <begin position="110"/>
        <end position="189"/>
    </location>
</feature>
<feature type="short sequence motif" description="Important for interaction with partner proteins" evidence="1">
    <location>
        <begin position="184"/>
        <end position="189"/>
    </location>
</feature>
<feature type="compositionally biased region" description="Low complexity" evidence="2">
    <location>
        <begin position="112"/>
        <end position="121"/>
    </location>
</feature>
<feature type="compositionally biased region" description="Low complexity" evidence="2">
    <location>
        <begin position="130"/>
        <end position="179"/>
    </location>
</feature>
<comment type="function">
    <text evidence="1">Plays an important role in DNA replication, recombination and repair. Binds to ssDNA and to an array of partner proteins to recruit them to their sites of action during DNA metabolism.</text>
</comment>
<comment type="subunit">
    <text evidence="1">Homotetramer.</text>
</comment>
<evidence type="ECO:0000255" key="1">
    <source>
        <dbReference type="HAMAP-Rule" id="MF_00984"/>
    </source>
</evidence>
<evidence type="ECO:0000256" key="2">
    <source>
        <dbReference type="SAM" id="MobiDB-lite"/>
    </source>
</evidence>
<reference key="1">
    <citation type="journal article" date="2003" name="Proc. Natl. Acad. Sci. U.S.A.">
        <title>The complete genome sequence of the Arabidopsis and tomato pathogen Pseudomonas syringae pv. tomato DC3000.</title>
        <authorList>
            <person name="Buell C.R."/>
            <person name="Joardar V."/>
            <person name="Lindeberg M."/>
            <person name="Selengut J."/>
            <person name="Paulsen I.T."/>
            <person name="Gwinn M.L."/>
            <person name="Dodson R.J."/>
            <person name="DeBoy R.T."/>
            <person name="Durkin A.S."/>
            <person name="Kolonay J.F."/>
            <person name="Madupu R."/>
            <person name="Daugherty S.C."/>
            <person name="Brinkac L.M."/>
            <person name="Beanan M.J."/>
            <person name="Haft D.H."/>
            <person name="Nelson W.C."/>
            <person name="Davidsen T.M."/>
            <person name="Zafar N."/>
            <person name="Zhou L."/>
            <person name="Liu J."/>
            <person name="Yuan Q."/>
            <person name="Khouri H.M."/>
            <person name="Fedorova N.B."/>
            <person name="Tran B."/>
            <person name="Russell D."/>
            <person name="Berry K.J."/>
            <person name="Utterback T.R."/>
            <person name="Van Aken S.E."/>
            <person name="Feldblyum T.V."/>
            <person name="D'Ascenzo M."/>
            <person name="Deng W.-L."/>
            <person name="Ramos A.R."/>
            <person name="Alfano J.R."/>
            <person name="Cartinhour S."/>
            <person name="Chatterjee A.K."/>
            <person name="Delaney T.P."/>
            <person name="Lazarowitz S.G."/>
            <person name="Martin G.B."/>
            <person name="Schneider D.J."/>
            <person name="Tang X."/>
            <person name="Bender C.L."/>
            <person name="White O."/>
            <person name="Fraser C.M."/>
            <person name="Collmer A."/>
        </authorList>
    </citation>
    <scope>NUCLEOTIDE SEQUENCE [LARGE SCALE GENOMIC DNA]</scope>
    <source>
        <strain>ATCC BAA-871 / DC3000</strain>
    </source>
</reference>
<name>SSB_PSESM</name>
<gene>
    <name type="primary">ssb</name>
    <name type="ordered locus">PSPTO_0656</name>
</gene>
<keyword id="KW-0227">DNA damage</keyword>
<keyword id="KW-0233">DNA recombination</keyword>
<keyword id="KW-0234">DNA repair</keyword>
<keyword id="KW-0235">DNA replication</keyword>
<keyword id="KW-0238">DNA-binding</keyword>
<keyword id="KW-1185">Reference proteome</keyword>
<proteinExistence type="inferred from homology"/>
<accession>Q889U1</accession>
<dbReference type="EMBL" id="AE016853">
    <property type="protein sequence ID" value="AAO54198.1"/>
    <property type="molecule type" value="Genomic_DNA"/>
</dbReference>
<dbReference type="RefSeq" id="NP_790503.1">
    <property type="nucleotide sequence ID" value="NC_004578.1"/>
</dbReference>
<dbReference type="RefSeq" id="WP_003426596.1">
    <property type="nucleotide sequence ID" value="NC_004578.1"/>
</dbReference>
<dbReference type="SMR" id="Q889U1"/>
<dbReference type="STRING" id="223283.PSPTO_0656"/>
<dbReference type="KEGG" id="pst:PSPTO_0656"/>
<dbReference type="PATRIC" id="fig|223283.9.peg.662"/>
<dbReference type="eggNOG" id="COG0629">
    <property type="taxonomic scope" value="Bacteria"/>
</dbReference>
<dbReference type="HOGENOM" id="CLU_078758_0_2_6"/>
<dbReference type="OrthoDB" id="9809878at2"/>
<dbReference type="PhylomeDB" id="Q889U1"/>
<dbReference type="Proteomes" id="UP000002515">
    <property type="component" value="Chromosome"/>
</dbReference>
<dbReference type="GO" id="GO:0009295">
    <property type="term" value="C:nucleoid"/>
    <property type="evidence" value="ECO:0007669"/>
    <property type="project" value="TreeGrafter"/>
</dbReference>
<dbReference type="GO" id="GO:0003697">
    <property type="term" value="F:single-stranded DNA binding"/>
    <property type="evidence" value="ECO:0007669"/>
    <property type="project" value="UniProtKB-UniRule"/>
</dbReference>
<dbReference type="GO" id="GO:0006310">
    <property type="term" value="P:DNA recombination"/>
    <property type="evidence" value="ECO:0007669"/>
    <property type="project" value="UniProtKB-UniRule"/>
</dbReference>
<dbReference type="GO" id="GO:0006281">
    <property type="term" value="P:DNA repair"/>
    <property type="evidence" value="ECO:0007669"/>
    <property type="project" value="UniProtKB-UniRule"/>
</dbReference>
<dbReference type="GO" id="GO:0006260">
    <property type="term" value="P:DNA replication"/>
    <property type="evidence" value="ECO:0007669"/>
    <property type="project" value="UniProtKB-UniRule"/>
</dbReference>
<dbReference type="CDD" id="cd04496">
    <property type="entry name" value="SSB_OBF"/>
    <property type="match status" value="1"/>
</dbReference>
<dbReference type="FunFam" id="2.40.50.140:FF:000244">
    <property type="entry name" value="Single-stranded DNA-binding protein"/>
    <property type="match status" value="1"/>
</dbReference>
<dbReference type="Gene3D" id="2.40.50.140">
    <property type="entry name" value="Nucleic acid-binding proteins"/>
    <property type="match status" value="1"/>
</dbReference>
<dbReference type="HAMAP" id="MF_00984">
    <property type="entry name" value="SSB"/>
    <property type="match status" value="1"/>
</dbReference>
<dbReference type="InterPro" id="IPR012340">
    <property type="entry name" value="NA-bd_OB-fold"/>
</dbReference>
<dbReference type="InterPro" id="IPR000424">
    <property type="entry name" value="Primosome_PriB/ssb"/>
</dbReference>
<dbReference type="InterPro" id="IPR011344">
    <property type="entry name" value="ssDNA-bd"/>
</dbReference>
<dbReference type="NCBIfam" id="NF004357">
    <property type="entry name" value="PRK05733.1"/>
    <property type="match status" value="1"/>
</dbReference>
<dbReference type="NCBIfam" id="TIGR00621">
    <property type="entry name" value="ssb"/>
    <property type="match status" value="1"/>
</dbReference>
<dbReference type="PANTHER" id="PTHR10302">
    <property type="entry name" value="SINGLE-STRANDED DNA-BINDING PROTEIN"/>
    <property type="match status" value="1"/>
</dbReference>
<dbReference type="PANTHER" id="PTHR10302:SF27">
    <property type="entry name" value="SINGLE-STRANDED DNA-BINDING PROTEIN"/>
    <property type="match status" value="1"/>
</dbReference>
<dbReference type="Pfam" id="PF00436">
    <property type="entry name" value="SSB"/>
    <property type="match status" value="1"/>
</dbReference>
<dbReference type="PIRSF" id="PIRSF002070">
    <property type="entry name" value="SSB"/>
    <property type="match status" value="1"/>
</dbReference>
<dbReference type="SUPFAM" id="SSF50249">
    <property type="entry name" value="Nucleic acid-binding proteins"/>
    <property type="match status" value="1"/>
</dbReference>
<dbReference type="PROSITE" id="PS50935">
    <property type="entry name" value="SSB"/>
    <property type="match status" value="1"/>
</dbReference>
<sequence>MARGVNKVILVGTCGQDPEVRYLPNGNAVTNLSLATSEQWTDKQSGQKVEKTEWHRVSMFGKVAEIAGEYLRKGSQVYIEGKLQTREWEKDGIKRYTTEIVVDMQGTMQLLGGRPQGDAQQGQGGGGNYNQSAPRPQQSRPQQSAPQQSAPQQNYNQQPPQQRDSRPAPQQQAPQPAADFDSFDDDIPF</sequence>
<organism>
    <name type="scientific">Pseudomonas syringae pv. tomato (strain ATCC BAA-871 / DC3000)</name>
    <dbReference type="NCBI Taxonomy" id="223283"/>
    <lineage>
        <taxon>Bacteria</taxon>
        <taxon>Pseudomonadati</taxon>
        <taxon>Pseudomonadota</taxon>
        <taxon>Gammaproteobacteria</taxon>
        <taxon>Pseudomonadales</taxon>
        <taxon>Pseudomonadaceae</taxon>
        <taxon>Pseudomonas</taxon>
    </lineage>
</organism>